<dbReference type="EC" id="6.3.2.1" evidence="1"/>
<dbReference type="EMBL" id="CP000153">
    <property type="protein sequence ID" value="ABB43642.1"/>
    <property type="molecule type" value="Genomic_DNA"/>
</dbReference>
<dbReference type="RefSeq" id="WP_011371996.1">
    <property type="nucleotide sequence ID" value="NC_007575.1"/>
</dbReference>
<dbReference type="SMR" id="Q30TN9"/>
<dbReference type="STRING" id="326298.Suden_0361"/>
<dbReference type="KEGG" id="tdn:Suden_0361"/>
<dbReference type="eggNOG" id="COG0414">
    <property type="taxonomic scope" value="Bacteria"/>
</dbReference>
<dbReference type="HOGENOM" id="CLU_047148_0_0_7"/>
<dbReference type="OrthoDB" id="9773087at2"/>
<dbReference type="UniPathway" id="UPA00028">
    <property type="reaction ID" value="UER00005"/>
</dbReference>
<dbReference type="Proteomes" id="UP000002714">
    <property type="component" value="Chromosome"/>
</dbReference>
<dbReference type="GO" id="GO:0005829">
    <property type="term" value="C:cytosol"/>
    <property type="evidence" value="ECO:0007669"/>
    <property type="project" value="TreeGrafter"/>
</dbReference>
<dbReference type="GO" id="GO:0005524">
    <property type="term" value="F:ATP binding"/>
    <property type="evidence" value="ECO:0007669"/>
    <property type="project" value="UniProtKB-KW"/>
</dbReference>
<dbReference type="GO" id="GO:0004592">
    <property type="term" value="F:pantoate-beta-alanine ligase activity"/>
    <property type="evidence" value="ECO:0007669"/>
    <property type="project" value="UniProtKB-UniRule"/>
</dbReference>
<dbReference type="GO" id="GO:0015940">
    <property type="term" value="P:pantothenate biosynthetic process"/>
    <property type="evidence" value="ECO:0007669"/>
    <property type="project" value="UniProtKB-UniRule"/>
</dbReference>
<dbReference type="CDD" id="cd00560">
    <property type="entry name" value="PanC"/>
    <property type="match status" value="1"/>
</dbReference>
<dbReference type="Gene3D" id="3.40.50.620">
    <property type="entry name" value="HUPs"/>
    <property type="match status" value="1"/>
</dbReference>
<dbReference type="Gene3D" id="3.30.1300.10">
    <property type="entry name" value="Pantoate-beta-alanine ligase, C-terminal domain"/>
    <property type="match status" value="1"/>
</dbReference>
<dbReference type="HAMAP" id="MF_00158">
    <property type="entry name" value="PanC"/>
    <property type="match status" value="1"/>
</dbReference>
<dbReference type="InterPro" id="IPR004821">
    <property type="entry name" value="Cyt_trans-like"/>
</dbReference>
<dbReference type="InterPro" id="IPR003721">
    <property type="entry name" value="Pantoate_ligase"/>
</dbReference>
<dbReference type="InterPro" id="IPR042176">
    <property type="entry name" value="Pantoate_ligase_C"/>
</dbReference>
<dbReference type="InterPro" id="IPR014729">
    <property type="entry name" value="Rossmann-like_a/b/a_fold"/>
</dbReference>
<dbReference type="NCBIfam" id="TIGR00125">
    <property type="entry name" value="cyt_tran_rel"/>
    <property type="match status" value="1"/>
</dbReference>
<dbReference type="NCBIfam" id="TIGR00018">
    <property type="entry name" value="panC"/>
    <property type="match status" value="1"/>
</dbReference>
<dbReference type="PANTHER" id="PTHR21299">
    <property type="entry name" value="CYTIDYLATE KINASE/PANTOATE-BETA-ALANINE LIGASE"/>
    <property type="match status" value="1"/>
</dbReference>
<dbReference type="PANTHER" id="PTHR21299:SF1">
    <property type="entry name" value="PANTOATE--BETA-ALANINE LIGASE"/>
    <property type="match status" value="1"/>
</dbReference>
<dbReference type="Pfam" id="PF02569">
    <property type="entry name" value="Pantoate_ligase"/>
    <property type="match status" value="1"/>
</dbReference>
<dbReference type="SUPFAM" id="SSF52374">
    <property type="entry name" value="Nucleotidylyl transferase"/>
    <property type="match status" value="1"/>
</dbReference>
<organism>
    <name type="scientific">Sulfurimonas denitrificans (strain ATCC 33889 / DSM 1251)</name>
    <name type="common">Thiomicrospira denitrificans (strain ATCC 33889 / DSM 1251)</name>
    <dbReference type="NCBI Taxonomy" id="326298"/>
    <lineage>
        <taxon>Bacteria</taxon>
        <taxon>Pseudomonadati</taxon>
        <taxon>Campylobacterota</taxon>
        <taxon>Epsilonproteobacteria</taxon>
        <taxon>Campylobacterales</taxon>
        <taxon>Sulfurimonadaceae</taxon>
        <taxon>Sulfurimonas</taxon>
    </lineage>
</organism>
<feature type="chain" id="PRO_0000305570" description="Pantothenate synthetase">
    <location>
        <begin position="1"/>
        <end position="273"/>
    </location>
</feature>
<feature type="active site" description="Proton donor" evidence="1">
    <location>
        <position position="34"/>
    </location>
</feature>
<feature type="binding site" evidence="1">
    <location>
        <begin position="27"/>
        <end position="34"/>
    </location>
    <ligand>
        <name>ATP</name>
        <dbReference type="ChEBI" id="CHEBI:30616"/>
    </ligand>
</feature>
<feature type="binding site" evidence="1">
    <location>
        <position position="58"/>
    </location>
    <ligand>
        <name>(R)-pantoate</name>
        <dbReference type="ChEBI" id="CHEBI:15980"/>
    </ligand>
</feature>
<feature type="binding site" evidence="1">
    <location>
        <position position="58"/>
    </location>
    <ligand>
        <name>beta-alanine</name>
        <dbReference type="ChEBI" id="CHEBI:57966"/>
    </ligand>
</feature>
<feature type="binding site" evidence="1">
    <location>
        <begin position="144"/>
        <end position="147"/>
    </location>
    <ligand>
        <name>ATP</name>
        <dbReference type="ChEBI" id="CHEBI:30616"/>
    </ligand>
</feature>
<feature type="binding site" evidence="1">
    <location>
        <position position="150"/>
    </location>
    <ligand>
        <name>(R)-pantoate</name>
        <dbReference type="ChEBI" id="CHEBI:15980"/>
    </ligand>
</feature>
<feature type="binding site" evidence="1">
    <location>
        <position position="173"/>
    </location>
    <ligand>
        <name>ATP</name>
        <dbReference type="ChEBI" id="CHEBI:30616"/>
    </ligand>
</feature>
<feature type="binding site" evidence="1">
    <location>
        <begin position="181"/>
        <end position="184"/>
    </location>
    <ligand>
        <name>ATP</name>
        <dbReference type="ChEBI" id="CHEBI:30616"/>
    </ligand>
</feature>
<comment type="function">
    <text evidence="1">Catalyzes the condensation of pantoate with beta-alanine in an ATP-dependent reaction via a pantoyl-adenylate intermediate.</text>
</comment>
<comment type="catalytic activity">
    <reaction evidence="1">
        <text>(R)-pantoate + beta-alanine + ATP = (R)-pantothenate + AMP + diphosphate + H(+)</text>
        <dbReference type="Rhea" id="RHEA:10912"/>
        <dbReference type="ChEBI" id="CHEBI:15378"/>
        <dbReference type="ChEBI" id="CHEBI:15980"/>
        <dbReference type="ChEBI" id="CHEBI:29032"/>
        <dbReference type="ChEBI" id="CHEBI:30616"/>
        <dbReference type="ChEBI" id="CHEBI:33019"/>
        <dbReference type="ChEBI" id="CHEBI:57966"/>
        <dbReference type="ChEBI" id="CHEBI:456215"/>
        <dbReference type="EC" id="6.3.2.1"/>
    </reaction>
</comment>
<comment type="pathway">
    <text evidence="1">Cofactor biosynthesis; (R)-pantothenate biosynthesis; (R)-pantothenate from (R)-pantoate and beta-alanine: step 1/1.</text>
</comment>
<comment type="subunit">
    <text evidence="1">Homodimer.</text>
</comment>
<comment type="subcellular location">
    <subcellularLocation>
        <location evidence="1">Cytoplasm</location>
    </subcellularLocation>
</comment>
<comment type="miscellaneous">
    <text evidence="1">The reaction proceeds by a bi uni uni bi ping pong mechanism.</text>
</comment>
<comment type="similarity">
    <text evidence="1">Belongs to the pantothenate synthetase family.</text>
</comment>
<protein>
    <recommendedName>
        <fullName evidence="1">Pantothenate synthetase</fullName>
        <shortName evidence="1">PS</shortName>
        <ecNumber evidence="1">6.3.2.1</ecNumber>
    </recommendedName>
    <alternativeName>
        <fullName evidence="1">Pantoate--beta-alanine ligase</fullName>
    </alternativeName>
    <alternativeName>
        <fullName evidence="1">Pantoate-activating enzyme</fullName>
    </alternativeName>
</protein>
<evidence type="ECO:0000255" key="1">
    <source>
        <dbReference type="HAMAP-Rule" id="MF_00158"/>
    </source>
</evidence>
<name>PANC_SULDN</name>
<reference key="1">
    <citation type="journal article" date="2008" name="Appl. Environ. Microbiol.">
        <title>Genome of the epsilonproteobacterial chemolithoautotroph Sulfurimonas denitrificans.</title>
        <authorList>
            <person name="Sievert S.M."/>
            <person name="Scott K.M."/>
            <person name="Klotz M.G."/>
            <person name="Chain P.S.G."/>
            <person name="Hauser L.J."/>
            <person name="Hemp J."/>
            <person name="Huegler M."/>
            <person name="Land M."/>
            <person name="Lapidus A."/>
            <person name="Larimer F.W."/>
            <person name="Lucas S."/>
            <person name="Malfatti S.A."/>
            <person name="Meyer F."/>
            <person name="Paulsen I.T."/>
            <person name="Ren Q."/>
            <person name="Simon J."/>
            <person name="Bailey K."/>
            <person name="Diaz E."/>
            <person name="Fitzpatrick K.A."/>
            <person name="Glover B."/>
            <person name="Gwatney N."/>
            <person name="Korajkic A."/>
            <person name="Long A."/>
            <person name="Mobberley J.M."/>
            <person name="Pantry S.N."/>
            <person name="Pazder G."/>
            <person name="Peterson S."/>
            <person name="Quintanilla J.D."/>
            <person name="Sprinkle R."/>
            <person name="Stephens J."/>
            <person name="Thomas P."/>
            <person name="Vaughn R."/>
            <person name="Weber M.J."/>
            <person name="Wooten L.L."/>
        </authorList>
    </citation>
    <scope>NUCLEOTIDE SEQUENCE [LARGE SCALE GENOMIC DNA]</scope>
    <source>
        <strain>ATCC 33889 / DSM 1251</strain>
    </source>
</reference>
<gene>
    <name evidence="1" type="primary">panC</name>
    <name type="ordered locus">Suden_0361</name>
</gene>
<sequence>MKIISNPLELKEYLKDEKRSIGFIPTMGALHEGHIALIKKAKEQNELVVVSIFLNPTQFLKGEDLDKYPKKDEADRQICKLCGVDILFFPHVDGIYGSDEVSLLAPKIRGFVLEGQSRPSHFNGVLTVVMKLLNIVRPKRAYFGKKDAQQLNLISLMVKQLFMSVEIVAVDTVREKDGLALSSRNAYLTPAQRQEALKIATSLRSATAMVMRGIFDSELIIANMREILSPLDISYVAIVNREFTELKRVEIGNSVILVEASLGSTRLLDNIWL</sequence>
<keyword id="KW-0067">ATP-binding</keyword>
<keyword id="KW-0963">Cytoplasm</keyword>
<keyword id="KW-0436">Ligase</keyword>
<keyword id="KW-0547">Nucleotide-binding</keyword>
<keyword id="KW-0566">Pantothenate biosynthesis</keyword>
<keyword id="KW-1185">Reference proteome</keyword>
<accession>Q30TN9</accession>
<proteinExistence type="inferred from homology"/>